<evidence type="ECO:0000250" key="1"/>
<evidence type="ECO:0000250" key="2">
    <source>
        <dbReference type="UniProtKB" id="O75874"/>
    </source>
</evidence>
<evidence type="ECO:0000250" key="3">
    <source>
        <dbReference type="UniProtKB" id="O88844"/>
    </source>
</evidence>
<evidence type="ECO:0000250" key="4">
    <source>
        <dbReference type="UniProtKB" id="P41562"/>
    </source>
</evidence>
<evidence type="ECO:0000250" key="5">
    <source>
        <dbReference type="UniProtKB" id="Q9XSG3"/>
    </source>
</evidence>
<evidence type="ECO:0000305" key="6"/>
<keyword id="KW-0007">Acetylation</keyword>
<keyword id="KW-0963">Cytoplasm</keyword>
<keyword id="KW-0329">Glyoxylate bypass</keyword>
<keyword id="KW-0460">Magnesium</keyword>
<keyword id="KW-0464">Manganese</keyword>
<keyword id="KW-0479">Metal-binding</keyword>
<keyword id="KW-0521">NADP</keyword>
<keyword id="KW-0560">Oxidoreductase</keyword>
<keyword id="KW-0597">Phosphoprotein</keyword>
<keyword id="KW-1185">Reference proteome</keyword>
<keyword id="KW-0816">Tricarboxylic acid cycle</keyword>
<reference key="1">
    <citation type="submission" date="2002-12" db="EMBL/GenBank/DDBJ databases">
        <title>Ovine cytosolic NADP-isocitrate dehydrogenase.</title>
        <authorList>
            <person name="Kenoutis C."/>
            <person name="Arvanitakis I."/>
            <person name="Bizelis J."/>
            <person name="Oikonomou I."/>
            <person name="Katinakis P."/>
            <person name="Rogdakis E."/>
        </authorList>
    </citation>
    <scope>NUCLEOTIDE SEQUENCE [MRNA]</scope>
</reference>
<comment type="function">
    <text evidence="2 5">Catalyzes the NADP(+)-dependent oxidative decarboxylation of isocitrate (D-threo-isocitrate) to 2-ketoglutarate (2-oxoglutarate), which is required by other enzymes such as the phytanoyl-CoA dioxygenase (By similarity). Plays a critical role in the generation of NADPH, an important cofactor in many biosynthesis pathways (By similarity). May act as a corneal epithelial crystallin and may be involved in maintaining corneal epithelial transparency (By similarity).</text>
</comment>
<comment type="catalytic activity">
    <reaction evidence="3">
        <text>D-threo-isocitrate + NADP(+) = 2-oxoglutarate + CO2 + NADPH</text>
        <dbReference type="Rhea" id="RHEA:19629"/>
        <dbReference type="ChEBI" id="CHEBI:15562"/>
        <dbReference type="ChEBI" id="CHEBI:16526"/>
        <dbReference type="ChEBI" id="CHEBI:16810"/>
        <dbReference type="ChEBI" id="CHEBI:57783"/>
        <dbReference type="ChEBI" id="CHEBI:58349"/>
        <dbReference type="EC" id="1.1.1.42"/>
    </reaction>
    <physiologicalReaction direction="left-to-right" evidence="3">
        <dbReference type="Rhea" id="RHEA:19630"/>
    </physiologicalReaction>
</comment>
<comment type="cofactor">
    <cofactor evidence="3">
        <name>Mg(2+)</name>
        <dbReference type="ChEBI" id="CHEBI:18420"/>
    </cofactor>
    <cofactor evidence="3">
        <name>Mn(2+)</name>
        <dbReference type="ChEBI" id="CHEBI:29035"/>
    </cofactor>
    <text evidence="3">Binds 1 Mg(2+) or Mn(2+) ion per subunit.</text>
</comment>
<comment type="subunit">
    <text evidence="3">Homodimer.</text>
</comment>
<comment type="subcellular location">
    <subcellularLocation>
        <location evidence="4">Cytoplasm</location>
        <location evidence="4">Cytosol</location>
    </subcellularLocation>
</comment>
<comment type="PTM">
    <text evidence="1">Acetylation at Lys-374 dramatically reduces catalytic activity.</text>
</comment>
<comment type="similarity">
    <text evidence="6">Belongs to the isocitrate and isopropylmalate dehydrogenases family.</text>
</comment>
<name>IDHC_SHEEP</name>
<gene>
    <name type="primary">IDH1</name>
</gene>
<dbReference type="EC" id="1.1.1.42" evidence="3"/>
<dbReference type="EMBL" id="AY208678">
    <property type="protein sequence ID" value="AAP41947.1"/>
    <property type="molecule type" value="mRNA"/>
</dbReference>
<dbReference type="RefSeq" id="NP_001009276.1">
    <property type="nucleotide sequence ID" value="NM_001009276.1"/>
</dbReference>
<dbReference type="SMR" id="Q6XUZ5"/>
<dbReference type="STRING" id="9940.ENSOARP00000020383"/>
<dbReference type="PaxDb" id="9940-ENSOARP00000020383"/>
<dbReference type="GeneID" id="443257"/>
<dbReference type="KEGG" id="oas:443257"/>
<dbReference type="CTD" id="3417"/>
<dbReference type="eggNOG" id="KOG1526">
    <property type="taxonomic scope" value="Eukaryota"/>
</dbReference>
<dbReference type="OrthoDB" id="248923at2759"/>
<dbReference type="Proteomes" id="UP000002356">
    <property type="component" value="Unplaced"/>
</dbReference>
<dbReference type="GO" id="GO:0005829">
    <property type="term" value="C:cytosol"/>
    <property type="evidence" value="ECO:0007669"/>
    <property type="project" value="UniProtKB-SubCell"/>
</dbReference>
<dbReference type="GO" id="GO:0005739">
    <property type="term" value="C:mitochondrion"/>
    <property type="evidence" value="ECO:0007669"/>
    <property type="project" value="TreeGrafter"/>
</dbReference>
<dbReference type="GO" id="GO:0005777">
    <property type="term" value="C:peroxisome"/>
    <property type="evidence" value="ECO:0007669"/>
    <property type="project" value="TreeGrafter"/>
</dbReference>
<dbReference type="GO" id="GO:0004450">
    <property type="term" value="F:isocitrate dehydrogenase (NADP+) activity"/>
    <property type="evidence" value="ECO:0000250"/>
    <property type="project" value="UniProtKB"/>
</dbReference>
<dbReference type="GO" id="GO:0000287">
    <property type="term" value="F:magnesium ion binding"/>
    <property type="evidence" value="ECO:0000250"/>
    <property type="project" value="UniProtKB"/>
</dbReference>
<dbReference type="GO" id="GO:0051287">
    <property type="term" value="F:NAD binding"/>
    <property type="evidence" value="ECO:0007669"/>
    <property type="project" value="InterPro"/>
</dbReference>
<dbReference type="GO" id="GO:0006103">
    <property type="term" value="P:2-oxoglutarate metabolic process"/>
    <property type="evidence" value="ECO:0000250"/>
    <property type="project" value="UniProtKB"/>
</dbReference>
<dbReference type="GO" id="GO:0006097">
    <property type="term" value="P:glyoxylate cycle"/>
    <property type="evidence" value="ECO:0007669"/>
    <property type="project" value="UniProtKB-KW"/>
</dbReference>
<dbReference type="GO" id="GO:0006102">
    <property type="term" value="P:isocitrate metabolic process"/>
    <property type="evidence" value="ECO:0000250"/>
    <property type="project" value="UniProtKB"/>
</dbReference>
<dbReference type="GO" id="GO:0006739">
    <property type="term" value="P:NADP metabolic process"/>
    <property type="evidence" value="ECO:0007669"/>
    <property type="project" value="TreeGrafter"/>
</dbReference>
<dbReference type="GO" id="GO:0006099">
    <property type="term" value="P:tricarboxylic acid cycle"/>
    <property type="evidence" value="ECO:0007669"/>
    <property type="project" value="UniProtKB-KW"/>
</dbReference>
<dbReference type="FunFam" id="3.40.718.10:FF:000002">
    <property type="entry name" value="Isocitrate dehydrogenase [NADP]"/>
    <property type="match status" value="1"/>
</dbReference>
<dbReference type="Gene3D" id="3.40.718.10">
    <property type="entry name" value="Isopropylmalate Dehydrogenase"/>
    <property type="match status" value="1"/>
</dbReference>
<dbReference type="InterPro" id="IPR019818">
    <property type="entry name" value="IsoCit/isopropylmalate_DH_CS"/>
</dbReference>
<dbReference type="InterPro" id="IPR004790">
    <property type="entry name" value="Isocitrate_DH_NADP"/>
</dbReference>
<dbReference type="InterPro" id="IPR024084">
    <property type="entry name" value="IsoPropMal-DH-like_dom"/>
</dbReference>
<dbReference type="NCBIfam" id="TIGR00127">
    <property type="entry name" value="nadp_idh_euk"/>
    <property type="match status" value="1"/>
</dbReference>
<dbReference type="NCBIfam" id="NF006156">
    <property type="entry name" value="PRK08299.1"/>
    <property type="match status" value="1"/>
</dbReference>
<dbReference type="PANTHER" id="PTHR11822:SF21">
    <property type="entry name" value="ISOCITRATE DEHYDROGENASE [NADP], MITOCHONDRIAL"/>
    <property type="match status" value="1"/>
</dbReference>
<dbReference type="PANTHER" id="PTHR11822">
    <property type="entry name" value="NADP-SPECIFIC ISOCITRATE DEHYDROGENASE"/>
    <property type="match status" value="1"/>
</dbReference>
<dbReference type="Pfam" id="PF00180">
    <property type="entry name" value="Iso_dh"/>
    <property type="match status" value="1"/>
</dbReference>
<dbReference type="PIRSF" id="PIRSF000108">
    <property type="entry name" value="IDH_NADP"/>
    <property type="match status" value="1"/>
</dbReference>
<dbReference type="SMART" id="SM01329">
    <property type="entry name" value="Iso_dh"/>
    <property type="match status" value="1"/>
</dbReference>
<dbReference type="SUPFAM" id="SSF53659">
    <property type="entry name" value="Isocitrate/Isopropylmalate dehydrogenase-like"/>
    <property type="match status" value="1"/>
</dbReference>
<dbReference type="PROSITE" id="PS00470">
    <property type="entry name" value="IDH_IMDH"/>
    <property type="match status" value="1"/>
</dbReference>
<protein>
    <recommendedName>
        <fullName>Isocitrate dehydrogenase [NADP] cytoplasmic</fullName>
        <shortName>IDH</shortName>
        <shortName>IDH1</shortName>
        <ecNumber evidence="3">1.1.1.42</ecNumber>
    </recommendedName>
    <alternativeName>
        <fullName>Cytosolic NADP-isocitrate dehydrogenase</fullName>
    </alternativeName>
    <alternativeName>
        <fullName>IDPc</fullName>
    </alternativeName>
    <alternativeName>
        <fullName>NADP(+)-specific ICDH</fullName>
    </alternativeName>
    <alternativeName>
        <fullName>Oxalosuccinate decarboxylase</fullName>
    </alternativeName>
</protein>
<accession>Q6XUZ5</accession>
<sequence>MSHKIQGGSVVEMQGDEMTRIIWELIKEKLIFPYVDLDLHSYDLSIENRDATNDQVTKDAAEAIKKYNVGVKCATITPDEKRVEEFKLKQMWKSPNGTIRNILGGTVFREAIICKNIPRLVSGWVKPIIIGRHAYGDQYRATDFVVPGPGKVEICYTPSDGSPKTVYLVHNFTESGGVAMGMFNQDKSIEDFAHSSFQMALSKNWPLYLSTKNTILKKYDGRFKDIFQEIYDKQYKSQFEAQNIWYEHRLIDDMVAQAMKSEGGFIWACKNYDGDVQSDSVAQGYGSLGMMTSVLVCPDGKTVEAEAAHGTVTRHYRMYQKGQETSTNPIASIFAWTRGLAHRAKLDNNKELSFFAKALEEVCIETIEAGFMTKDLAACIKGLPNVQRSDYLNTFEFMDKLGENLQLKLAQAKL</sequence>
<proteinExistence type="evidence at transcript level"/>
<organism>
    <name type="scientific">Ovis aries</name>
    <name type="common">Sheep</name>
    <dbReference type="NCBI Taxonomy" id="9940"/>
    <lineage>
        <taxon>Eukaryota</taxon>
        <taxon>Metazoa</taxon>
        <taxon>Chordata</taxon>
        <taxon>Craniata</taxon>
        <taxon>Vertebrata</taxon>
        <taxon>Euteleostomi</taxon>
        <taxon>Mammalia</taxon>
        <taxon>Eutheria</taxon>
        <taxon>Laurasiatheria</taxon>
        <taxon>Artiodactyla</taxon>
        <taxon>Ruminantia</taxon>
        <taxon>Pecora</taxon>
        <taxon>Bovidae</taxon>
        <taxon>Caprinae</taxon>
        <taxon>Ovis</taxon>
    </lineage>
</organism>
<feature type="initiator methionine" description="Removed" evidence="2">
    <location>
        <position position="1"/>
    </location>
</feature>
<feature type="chain" id="PRO_0000236189" description="Isocitrate dehydrogenase [NADP] cytoplasmic">
    <location>
        <begin position="2"/>
        <end position="414"/>
    </location>
</feature>
<feature type="binding site" evidence="2">
    <location>
        <begin position="75"/>
        <end position="77"/>
    </location>
    <ligand>
        <name>NADP(+)</name>
        <dbReference type="ChEBI" id="CHEBI:58349"/>
    </ligand>
</feature>
<feature type="binding site" description="in other chain" evidence="2">
    <location>
        <position position="77"/>
    </location>
    <ligand>
        <name>substrate</name>
        <note>ligand shared between two neighboring subunits</note>
    </ligand>
</feature>
<feature type="binding site" evidence="2">
    <location>
        <position position="82"/>
    </location>
    <ligand>
        <name>NADP(+)</name>
        <dbReference type="ChEBI" id="CHEBI:58349"/>
    </ligand>
</feature>
<feature type="binding site" description="in other chain" evidence="2">
    <location>
        <begin position="94"/>
        <end position="100"/>
    </location>
    <ligand>
        <name>substrate</name>
        <note>ligand shared between two neighboring subunits</note>
    </ligand>
</feature>
<feature type="binding site" description="in other chain" evidence="2">
    <location>
        <position position="109"/>
    </location>
    <ligand>
        <name>substrate</name>
        <note>ligand shared between two neighboring subunits</note>
    </ligand>
</feature>
<feature type="binding site" description="in other chain" evidence="2">
    <location>
        <position position="132"/>
    </location>
    <ligand>
        <name>substrate</name>
        <note>ligand shared between two neighboring subunits</note>
    </ligand>
</feature>
<feature type="binding site" evidence="3">
    <location>
        <position position="212"/>
    </location>
    <ligand>
        <name>substrate</name>
        <note>ligand shared between two neighboring subunits</note>
    </ligand>
</feature>
<feature type="binding site" evidence="2">
    <location>
        <position position="252"/>
    </location>
    <ligand>
        <name>Mn(2+)</name>
        <dbReference type="ChEBI" id="CHEBI:29035"/>
        <note>ligand shared between two neighboring subunits</note>
    </ligand>
</feature>
<feature type="binding site" evidence="2">
    <location>
        <position position="260"/>
    </location>
    <ligand>
        <name>NADP(+)</name>
        <dbReference type="ChEBI" id="CHEBI:58349"/>
    </ligand>
</feature>
<feature type="binding site" description="in other chain" evidence="2">
    <location>
        <position position="275"/>
    </location>
    <ligand>
        <name>Mn(2+)</name>
        <dbReference type="ChEBI" id="CHEBI:29035"/>
        <note>ligand shared between two neighboring subunits</note>
    </ligand>
</feature>
<feature type="binding site" description="in other chain" evidence="2">
    <location>
        <position position="279"/>
    </location>
    <ligand>
        <name>Mn(2+)</name>
        <dbReference type="ChEBI" id="CHEBI:29035"/>
        <note>ligand shared between two neighboring subunits</note>
    </ligand>
</feature>
<feature type="binding site" evidence="2">
    <location>
        <begin position="310"/>
        <end position="315"/>
    </location>
    <ligand>
        <name>NADP(+)</name>
        <dbReference type="ChEBI" id="CHEBI:58349"/>
    </ligand>
</feature>
<feature type="binding site" evidence="2">
    <location>
        <position position="328"/>
    </location>
    <ligand>
        <name>NADP(+)</name>
        <dbReference type="ChEBI" id="CHEBI:58349"/>
    </ligand>
</feature>
<feature type="site" description="Critical for catalysis" evidence="1">
    <location>
        <position position="139"/>
    </location>
</feature>
<feature type="site" description="Critical for catalysis" evidence="1">
    <location>
        <position position="212"/>
    </location>
</feature>
<feature type="modified residue" description="N-acetylserine" evidence="2">
    <location>
        <position position="2"/>
    </location>
</feature>
<feature type="modified residue" description="Phosphotyrosine" evidence="2">
    <location>
        <position position="42"/>
    </location>
</feature>
<feature type="modified residue" description="N6-acetyllysine" evidence="3">
    <location>
        <position position="81"/>
    </location>
</feature>
<feature type="modified residue" description="N6-succinyllysine" evidence="3">
    <location>
        <position position="126"/>
    </location>
</feature>
<feature type="modified residue" description="N6-acetyllysine" evidence="3">
    <location>
        <position position="224"/>
    </location>
</feature>
<feature type="modified residue" description="N6-acetyllysine" evidence="3">
    <location>
        <position position="233"/>
    </location>
</feature>
<feature type="modified residue" description="N6-acetyllysine" evidence="2">
    <location>
        <position position="321"/>
    </location>
</feature>
<feature type="modified residue" description="Phosphoserine" evidence="3">
    <location>
        <position position="389"/>
    </location>
</feature>
<feature type="modified residue" description="N6-succinyllysine" evidence="3">
    <location>
        <position position="400"/>
    </location>
</feature>